<reference key="1">
    <citation type="journal article" date="2008" name="J. Bacteriol.">
        <title>Complete genome sequence of uropathogenic Proteus mirabilis, a master of both adherence and motility.</title>
        <authorList>
            <person name="Pearson M.M."/>
            <person name="Sebaihia M."/>
            <person name="Churcher C."/>
            <person name="Quail M.A."/>
            <person name="Seshasayee A.S."/>
            <person name="Luscombe N.M."/>
            <person name="Abdellah Z."/>
            <person name="Arrosmith C."/>
            <person name="Atkin B."/>
            <person name="Chillingworth T."/>
            <person name="Hauser H."/>
            <person name="Jagels K."/>
            <person name="Moule S."/>
            <person name="Mungall K."/>
            <person name="Norbertczak H."/>
            <person name="Rabbinowitsch E."/>
            <person name="Walker D."/>
            <person name="Whithead S."/>
            <person name="Thomson N.R."/>
            <person name="Rather P.N."/>
            <person name="Parkhill J."/>
            <person name="Mobley H.L.T."/>
        </authorList>
    </citation>
    <scope>NUCLEOTIDE SEQUENCE [LARGE SCALE GENOMIC DNA]</scope>
    <source>
        <strain>HI4320</strain>
    </source>
</reference>
<gene>
    <name evidence="1" type="primary">rapA</name>
    <name type="ordered locus">PMI2328</name>
</gene>
<dbReference type="EC" id="3.6.4.-" evidence="1"/>
<dbReference type="EMBL" id="AM942759">
    <property type="protein sequence ID" value="CAR44604.1"/>
    <property type="molecule type" value="Genomic_DNA"/>
</dbReference>
<dbReference type="RefSeq" id="WP_004249485.1">
    <property type="nucleotide sequence ID" value="NC_010554.1"/>
</dbReference>
<dbReference type="SMR" id="B4F2H6"/>
<dbReference type="EnsemblBacteria" id="CAR44604">
    <property type="protein sequence ID" value="CAR44604"/>
    <property type="gene ID" value="PMI2328"/>
</dbReference>
<dbReference type="GeneID" id="6801169"/>
<dbReference type="KEGG" id="pmr:PMI2328"/>
<dbReference type="eggNOG" id="COG0553">
    <property type="taxonomic scope" value="Bacteria"/>
</dbReference>
<dbReference type="HOGENOM" id="CLU_011520_0_0_6"/>
<dbReference type="Proteomes" id="UP000008319">
    <property type="component" value="Chromosome"/>
</dbReference>
<dbReference type="GO" id="GO:0005524">
    <property type="term" value="F:ATP binding"/>
    <property type="evidence" value="ECO:0007669"/>
    <property type="project" value="UniProtKB-UniRule"/>
</dbReference>
<dbReference type="GO" id="GO:0003677">
    <property type="term" value="F:DNA binding"/>
    <property type="evidence" value="ECO:0007669"/>
    <property type="project" value="UniProtKB-KW"/>
</dbReference>
<dbReference type="GO" id="GO:0004386">
    <property type="term" value="F:helicase activity"/>
    <property type="evidence" value="ECO:0007669"/>
    <property type="project" value="UniProtKB-UniRule"/>
</dbReference>
<dbReference type="GO" id="GO:0016817">
    <property type="term" value="F:hydrolase activity, acting on acid anhydrides"/>
    <property type="evidence" value="ECO:0007669"/>
    <property type="project" value="InterPro"/>
</dbReference>
<dbReference type="GO" id="GO:0006355">
    <property type="term" value="P:regulation of DNA-templated transcription"/>
    <property type="evidence" value="ECO:0007669"/>
    <property type="project" value="UniProtKB-UniRule"/>
</dbReference>
<dbReference type="CDD" id="cd18011">
    <property type="entry name" value="DEXDc_RapA"/>
    <property type="match status" value="1"/>
</dbReference>
<dbReference type="CDD" id="cd18793">
    <property type="entry name" value="SF2_C_SNF"/>
    <property type="match status" value="1"/>
</dbReference>
<dbReference type="FunFam" id="3.40.50.300:FF:000350">
    <property type="entry name" value="RNA polymerase-associated protein RapA"/>
    <property type="match status" value="1"/>
</dbReference>
<dbReference type="Gene3D" id="2.30.30.140">
    <property type="match status" value="1"/>
</dbReference>
<dbReference type="Gene3D" id="2.30.30.930">
    <property type="match status" value="1"/>
</dbReference>
<dbReference type="Gene3D" id="3.30.360.80">
    <property type="match status" value="1"/>
</dbReference>
<dbReference type="Gene3D" id="6.10.140.1500">
    <property type="match status" value="1"/>
</dbReference>
<dbReference type="Gene3D" id="6.10.140.2230">
    <property type="match status" value="1"/>
</dbReference>
<dbReference type="Gene3D" id="3.40.50.300">
    <property type="entry name" value="P-loop containing nucleotide triphosphate hydrolases"/>
    <property type="match status" value="1"/>
</dbReference>
<dbReference type="Gene3D" id="3.40.50.10810">
    <property type="entry name" value="Tandem AAA-ATPase domain"/>
    <property type="match status" value="1"/>
</dbReference>
<dbReference type="HAMAP" id="MF_01821">
    <property type="entry name" value="Helicase_RapA"/>
    <property type="match status" value="1"/>
</dbReference>
<dbReference type="InterPro" id="IPR014001">
    <property type="entry name" value="Helicase_ATP-bd"/>
</dbReference>
<dbReference type="InterPro" id="IPR001650">
    <property type="entry name" value="Helicase_C-like"/>
</dbReference>
<dbReference type="InterPro" id="IPR023949">
    <property type="entry name" value="Helicase_RapA"/>
</dbReference>
<dbReference type="InterPro" id="IPR027417">
    <property type="entry name" value="P-loop_NTPase"/>
</dbReference>
<dbReference type="InterPro" id="IPR022737">
    <property type="entry name" value="RapA_C"/>
</dbReference>
<dbReference type="InterPro" id="IPR038718">
    <property type="entry name" value="SNF2-like_sf"/>
</dbReference>
<dbReference type="InterPro" id="IPR049730">
    <property type="entry name" value="SNF2/RAD54-like_C"/>
</dbReference>
<dbReference type="InterPro" id="IPR000330">
    <property type="entry name" value="SNF2_N"/>
</dbReference>
<dbReference type="InterPro" id="IPR040765">
    <property type="entry name" value="Tudor_1_RapA"/>
</dbReference>
<dbReference type="InterPro" id="IPR040766">
    <property type="entry name" value="Tudor_2_RapA"/>
</dbReference>
<dbReference type="NCBIfam" id="NF003426">
    <property type="entry name" value="PRK04914.1"/>
    <property type="match status" value="1"/>
</dbReference>
<dbReference type="PANTHER" id="PTHR45766">
    <property type="entry name" value="DNA ANNEALING HELICASE AND ENDONUCLEASE ZRANB3 FAMILY MEMBER"/>
    <property type="match status" value="1"/>
</dbReference>
<dbReference type="PANTHER" id="PTHR45766:SF6">
    <property type="entry name" value="SWI_SNF-RELATED MATRIX-ASSOCIATED ACTIN-DEPENDENT REGULATOR OF CHROMATIN SUBFAMILY A-LIKE PROTEIN 1"/>
    <property type="match status" value="1"/>
</dbReference>
<dbReference type="Pfam" id="PF00271">
    <property type="entry name" value="Helicase_C"/>
    <property type="match status" value="1"/>
</dbReference>
<dbReference type="Pfam" id="PF12137">
    <property type="entry name" value="RapA_C"/>
    <property type="match status" value="1"/>
</dbReference>
<dbReference type="Pfam" id="PF00176">
    <property type="entry name" value="SNF2-rel_dom"/>
    <property type="match status" value="1"/>
</dbReference>
<dbReference type="Pfam" id="PF18339">
    <property type="entry name" value="Tudor_1_RapA"/>
    <property type="match status" value="1"/>
</dbReference>
<dbReference type="Pfam" id="PF18337">
    <property type="entry name" value="Tudor_RapA"/>
    <property type="match status" value="1"/>
</dbReference>
<dbReference type="SMART" id="SM00487">
    <property type="entry name" value="DEXDc"/>
    <property type="match status" value="1"/>
</dbReference>
<dbReference type="SMART" id="SM00490">
    <property type="entry name" value="HELICc"/>
    <property type="match status" value="1"/>
</dbReference>
<dbReference type="SUPFAM" id="SSF52540">
    <property type="entry name" value="P-loop containing nucleoside triphosphate hydrolases"/>
    <property type="match status" value="2"/>
</dbReference>
<dbReference type="PROSITE" id="PS51192">
    <property type="entry name" value="HELICASE_ATP_BIND_1"/>
    <property type="match status" value="1"/>
</dbReference>
<dbReference type="PROSITE" id="PS51194">
    <property type="entry name" value="HELICASE_CTER"/>
    <property type="match status" value="1"/>
</dbReference>
<proteinExistence type="inferred from homology"/>
<evidence type="ECO:0000255" key="1">
    <source>
        <dbReference type="HAMAP-Rule" id="MF_01821"/>
    </source>
</evidence>
<protein>
    <recommendedName>
        <fullName evidence="1">RNA polymerase-associated protein RapA</fullName>
        <ecNumber evidence="1">3.6.4.-</ecNumber>
    </recommendedName>
    <alternativeName>
        <fullName evidence="1">ATP-dependent helicase HepA</fullName>
    </alternativeName>
</protein>
<comment type="function">
    <text evidence="1">Transcription regulator that activates transcription by stimulating RNA polymerase (RNAP) recycling in case of stress conditions such as supercoiled DNA or high salt concentrations. Probably acts by releasing the RNAP, when it is trapped or immobilized on tightly supercoiled DNA. Does not activate transcription on linear DNA. Probably not involved in DNA repair.</text>
</comment>
<comment type="subunit">
    <text evidence="1">Interacts with the RNAP. Has a higher affinity for the core RNAP than for the holoenzyme. Its ATPase activity is stimulated by binding to RNAP.</text>
</comment>
<comment type="similarity">
    <text evidence="1">Belongs to the SNF2/RAD54 helicase family. RapA subfamily.</text>
</comment>
<keyword id="KW-0010">Activator</keyword>
<keyword id="KW-0067">ATP-binding</keyword>
<keyword id="KW-0238">DNA-binding</keyword>
<keyword id="KW-0347">Helicase</keyword>
<keyword id="KW-0378">Hydrolase</keyword>
<keyword id="KW-0547">Nucleotide-binding</keyword>
<keyword id="KW-1185">Reference proteome</keyword>
<keyword id="KW-0804">Transcription</keyword>
<keyword id="KW-0805">Transcription regulation</keyword>
<sequence>MPFTLGQRWISDTESELGLGTVVAIDARMVTLLFPACGENRLYSRHDAPITRVMFNVGDTVTSHEGWKLAIDNVVEDNGLLIYHGVRLDTEEPAQLREVFLDNKLTFNKPQDRLFAGQIDRMDRFALRYRARKFMSEQFKQAQSGLRGIRASLIPHQLYIANEVGKRHNPRVLLADEVGLGKTIEAGMIIHQQIMDGRAERVLIIVPESLQHQWLVEMLRRFNLRFSLFDDSRYSESLLDSDNPFETEQMIICSLDFVRKNKQRFEHLVEATWDMLVVDEAHHLVWSEKAPSREYQVIETLAEAIPSVLLLTATPEQLGQESHFARLRLLDPNRFHDYNEFINEQQKYRPVADAVTILLSEDDLNNEQQNSISEMISEQDIEPLLKASNTQGEERTKSRQALIHMLMDRHGTGRLLFRNTRSGVKGFPNRLLHAIKMPLPTQYQTAIKVAEIMAAKKSLEVRAKEMLYPERIYQEFEGENATWWNFDPRVEWLLGFLTANRHEKVLVICAQAATALQLEQVLREREGIRAAVFHEGMSLLERDRAAAYFASEEEGAQVLLCSEIGSEGRNFQFANQLVMFDLPFNPDLLEQRIGRLDRIGQNRDIDISVPYLEGTAQSVLLRWYHEGLDAFEHTCPTGRTIYDNEYDALVNYLAQPNELGDFDKFIVSCRKQHDEMKLKLEQGRDRLLEMHSNGGEVGVELANKIAEQDNDPDLVNFALNLFDIVGINQEDRSDSLIVLTPSDHMLVPDFPGLPQDGCTITFDREHALSREDTQFISWEHPIIRNGLDLVLSGDTGSCAVSLLKNKALPVGTLLVELIYVVEAQAPKHLHLTRFLPATPVRLLLDLKGNNLASQVEFESFNRQLNAVNRHTSSKLVNAVQNEVHHVLKASESLMEAEAKTLIEQAKQEADNALTHELSRLEALRAVNPNIRDDEVEAIENERTHILNHLDEATWRLDAIRLIVVTHQ</sequence>
<organism>
    <name type="scientific">Proteus mirabilis (strain HI4320)</name>
    <dbReference type="NCBI Taxonomy" id="529507"/>
    <lineage>
        <taxon>Bacteria</taxon>
        <taxon>Pseudomonadati</taxon>
        <taxon>Pseudomonadota</taxon>
        <taxon>Gammaproteobacteria</taxon>
        <taxon>Enterobacterales</taxon>
        <taxon>Morganellaceae</taxon>
        <taxon>Proteus</taxon>
    </lineage>
</organism>
<name>RAPA_PROMH</name>
<feature type="chain" id="PRO_1000188180" description="RNA polymerase-associated protein RapA">
    <location>
        <begin position="1"/>
        <end position="967"/>
    </location>
</feature>
<feature type="domain" description="Helicase ATP-binding" evidence="1">
    <location>
        <begin position="163"/>
        <end position="333"/>
    </location>
</feature>
<feature type="domain" description="Helicase C-terminal" evidence="1">
    <location>
        <begin position="489"/>
        <end position="660"/>
    </location>
</feature>
<feature type="short sequence motif" description="DEAH box">
    <location>
        <begin position="279"/>
        <end position="282"/>
    </location>
</feature>
<feature type="binding site" evidence="1">
    <location>
        <begin position="176"/>
        <end position="183"/>
    </location>
    <ligand>
        <name>ATP</name>
        <dbReference type="ChEBI" id="CHEBI:30616"/>
    </ligand>
</feature>
<accession>B4F2H6</accession>